<proteinExistence type="evidence at protein level"/>
<reference key="1">
    <citation type="journal article" date="1993" name="J. Biol. Chem.">
        <title>Saccharomyces cerevisiae cytoplasmic tyrosyl-tRNA synthetase gene. Isolation by complementation of a mutant Escherichia coli suppressor tRNA defective in aminoacylation and sequence analysis.</title>
        <authorList>
            <person name="Chow C.M."/>
            <person name="RajBhandary U.L."/>
        </authorList>
    </citation>
    <scope>NUCLEOTIDE SEQUENCE [MRNA]</scope>
    <scope>FUNCTION</scope>
    <scope>CATALYTIC ACTIVITY</scope>
</reference>
<reference key="2">
    <citation type="journal article" date="1997" name="Mol. Gen. Genet.">
        <title>Cytoplasmic tyrosyl-tRNA synthetase rescues the defect in mitochondrial genome maintenance caused by the nuclear mutation mgm104-1 in the yeast Saccharomyces cerevisiae.</title>
        <authorList>
            <person name="Guan M.-X."/>
        </authorList>
    </citation>
    <scope>NUCLEOTIDE SEQUENCE [GENOMIC DNA]</scope>
</reference>
<reference key="3">
    <citation type="journal article" date="1997" name="Yeast">
        <title>DNA sequence analysis of a 23,002 bp DNA fragment of the right arm of Saccharomyces cerevisiae chromosome VII.</title>
        <authorList>
            <person name="Arroyo J."/>
            <person name="Garcia-Gonzalez M."/>
            <person name="Garcia-Saez M.I."/>
            <person name="Sanchez-Perez M."/>
            <person name="Nombela C."/>
        </authorList>
    </citation>
    <scope>NUCLEOTIDE SEQUENCE [GENOMIC DNA]</scope>
    <source>
        <strain>ATCC 204508 / S288c</strain>
    </source>
</reference>
<reference key="4">
    <citation type="journal article" date="1997" name="Nature">
        <title>The nucleotide sequence of Saccharomyces cerevisiae chromosome VII.</title>
        <authorList>
            <person name="Tettelin H."/>
            <person name="Agostoni-Carbone M.L."/>
            <person name="Albermann K."/>
            <person name="Albers M."/>
            <person name="Arroyo J."/>
            <person name="Backes U."/>
            <person name="Barreiros T."/>
            <person name="Bertani I."/>
            <person name="Bjourson A.J."/>
            <person name="Brueckner M."/>
            <person name="Bruschi C.V."/>
            <person name="Carignani G."/>
            <person name="Castagnoli L."/>
            <person name="Cerdan E."/>
            <person name="Clemente M.L."/>
            <person name="Coblenz A."/>
            <person name="Coglievina M."/>
            <person name="Coissac E."/>
            <person name="Defoor E."/>
            <person name="Del Bino S."/>
            <person name="Delius H."/>
            <person name="Delneri D."/>
            <person name="de Wergifosse P."/>
            <person name="Dujon B."/>
            <person name="Durand P."/>
            <person name="Entian K.-D."/>
            <person name="Eraso P."/>
            <person name="Escribano V."/>
            <person name="Fabiani L."/>
            <person name="Fartmann B."/>
            <person name="Feroli F."/>
            <person name="Feuermann M."/>
            <person name="Frontali L."/>
            <person name="Garcia-Gonzalez M."/>
            <person name="Garcia-Saez M.I."/>
            <person name="Goffeau A."/>
            <person name="Guerreiro P."/>
            <person name="Hani J."/>
            <person name="Hansen M."/>
            <person name="Hebling U."/>
            <person name="Hernandez K."/>
            <person name="Heumann K."/>
            <person name="Hilger F."/>
            <person name="Hofmann B."/>
            <person name="Indge K.J."/>
            <person name="James C.M."/>
            <person name="Klima R."/>
            <person name="Koetter P."/>
            <person name="Kramer B."/>
            <person name="Kramer W."/>
            <person name="Lauquin G."/>
            <person name="Leuther H."/>
            <person name="Louis E.J."/>
            <person name="Maillier E."/>
            <person name="Marconi A."/>
            <person name="Martegani E."/>
            <person name="Mazon M.J."/>
            <person name="Mazzoni C."/>
            <person name="McReynolds A.D.K."/>
            <person name="Melchioretto P."/>
            <person name="Mewes H.-W."/>
            <person name="Minenkova O."/>
            <person name="Mueller-Auer S."/>
            <person name="Nawrocki A."/>
            <person name="Netter P."/>
            <person name="Neu R."/>
            <person name="Nombela C."/>
            <person name="Oliver S.G."/>
            <person name="Panzeri L."/>
            <person name="Paoluzi S."/>
            <person name="Plevani P."/>
            <person name="Portetelle D."/>
            <person name="Portillo F."/>
            <person name="Potier S."/>
            <person name="Purnelle B."/>
            <person name="Rieger M."/>
            <person name="Riles L."/>
            <person name="Rinaldi T."/>
            <person name="Robben J."/>
            <person name="Rodrigues-Pousada C."/>
            <person name="Rodriguez-Belmonte E."/>
            <person name="Rodriguez-Torres A.M."/>
            <person name="Rose M."/>
            <person name="Ruzzi M."/>
            <person name="Saliola M."/>
            <person name="Sanchez-Perez M."/>
            <person name="Schaefer B."/>
            <person name="Schaefer M."/>
            <person name="Scharfe M."/>
            <person name="Schmidheini T."/>
            <person name="Schreer A."/>
            <person name="Skala J."/>
            <person name="Souciet J.-L."/>
            <person name="Steensma H.Y."/>
            <person name="Talla E."/>
            <person name="Thierry A."/>
            <person name="Vandenbol M."/>
            <person name="van der Aart Q.J.M."/>
            <person name="Van Dyck L."/>
            <person name="Vanoni M."/>
            <person name="Verhasselt P."/>
            <person name="Voet M."/>
            <person name="Volckaert G."/>
            <person name="Wambutt R."/>
            <person name="Watson M.D."/>
            <person name="Weber N."/>
            <person name="Wedler E."/>
            <person name="Wedler H."/>
            <person name="Wipfli P."/>
            <person name="Wolf K."/>
            <person name="Wright L.F."/>
            <person name="Zaccaria P."/>
            <person name="Zimmermann M."/>
            <person name="Zollner A."/>
            <person name="Kleine K."/>
        </authorList>
    </citation>
    <scope>NUCLEOTIDE SEQUENCE [LARGE SCALE GENOMIC DNA]</scope>
    <source>
        <strain>ATCC 204508 / S288c</strain>
    </source>
</reference>
<reference key="5">
    <citation type="journal article" date="2014" name="G3 (Bethesda)">
        <title>The reference genome sequence of Saccharomyces cerevisiae: Then and now.</title>
        <authorList>
            <person name="Engel S.R."/>
            <person name="Dietrich F.S."/>
            <person name="Fisk D.G."/>
            <person name="Binkley G."/>
            <person name="Balakrishnan R."/>
            <person name="Costanzo M.C."/>
            <person name="Dwight S.S."/>
            <person name="Hitz B.C."/>
            <person name="Karra K."/>
            <person name="Nash R.S."/>
            <person name="Weng S."/>
            <person name="Wong E.D."/>
            <person name="Lloyd P."/>
            <person name="Skrzypek M.S."/>
            <person name="Miyasato S.R."/>
            <person name="Simison M."/>
            <person name="Cherry J.M."/>
        </authorList>
    </citation>
    <scope>GENOME REANNOTATION</scope>
    <source>
        <strain>ATCC 204508 / S288c</strain>
    </source>
</reference>
<reference key="6">
    <citation type="journal article" date="1994" name="Genes Dev.">
        <title>TFIIF-TAF-RNA polymerase II connection.</title>
        <authorList>
            <person name="Henry N.L."/>
            <person name="Campbell A.M."/>
            <person name="Feaver W.J."/>
            <person name="Poon D."/>
            <person name="Weil P.A."/>
            <person name="Kornberg R.D."/>
        </authorList>
    </citation>
    <scope>NUCLEOTIDE SEQUENCE [GENOMIC DNA] OF 1-36</scope>
    <source>
        <strain>ATCC 208279 / BJ926</strain>
    </source>
</reference>
<reference key="7">
    <citation type="submission" date="2005-06" db="UniProtKB">
        <authorList>
            <person name="Bienvenut W.V."/>
            <person name="Peters C."/>
        </authorList>
    </citation>
    <scope>PROTEIN SEQUENCE OF 2-18 AND 324-338</scope>
    <scope>CLEAVAGE OF INITIATOR METHIONINE</scope>
    <scope>ACETYLATION AT SER-2</scope>
    <scope>IDENTIFICATION BY MASS SPECTROMETRY</scope>
</reference>
<reference key="8">
    <citation type="journal article" date="1977" name="Eur. J. Biochem.">
        <title>Tyroslyl-tRNA synthetase from baker's yeast. Rapid isolation by affinity elution, molecular weight of the enzyme, and determination of essential sulfhydryl groups.</title>
        <authorList>
            <person name="Faulhammer H.G."/>
            <person name="Cramer F."/>
        </authorList>
    </citation>
    <scope>SUBUNIT</scope>
    <scope>ACTIVITY REGULATION</scope>
</reference>
<reference key="9">
    <citation type="journal article" date="1986" name="Biochemistry">
        <title>Specific substitution into the anticodon loop of yeast tyrosine transfer RNA.</title>
        <authorList>
            <person name="Bare L.A."/>
            <person name="Uhlenbeck O.C."/>
        </authorList>
    </citation>
    <scope>FUNCTION</scope>
    <scope>CATALYTIC ACTIVITY</scope>
    <scope>BIOPHYSICOCHEMICAL PROPERTIES</scope>
</reference>
<reference key="10">
    <citation type="journal article" date="1999" name="Proc. Natl. Acad. Sci. U.S.A.">
        <title>Nuclear tRNA aminoacylation and its role in nuclear export of endogenous tRNAs in Saccharomyces cerevisiae.</title>
        <authorList>
            <person name="Sarkar S."/>
            <person name="Azad A.K."/>
            <person name="Hopper A.K."/>
        </authorList>
    </citation>
    <scope>FUNCTION</scope>
</reference>
<reference key="11">
    <citation type="journal article" date="2000" name="Biochemistry">
        <title>Identity of tRNA for yeast tyrosyl-tRNA synthetase: tyrosylation is more sensitive to identity nucleotides than to structural features.</title>
        <authorList>
            <person name="Fechter P."/>
            <person name="Rudinger-Thirion J."/>
            <person name="Theobald-Dietrich A."/>
            <person name="Giege R."/>
        </authorList>
    </citation>
    <scope>FUNCTION</scope>
</reference>
<reference key="12">
    <citation type="journal article" date="2000" name="J. Biol. Chem.">
        <title>D-tyrosyl-tRNA(Tyr) metabolism in Saccharomyces cerevisiae.</title>
        <authorList>
            <person name="Soutourina J."/>
            <person name="Blanquet S."/>
            <person name="Plateau P."/>
        </authorList>
    </citation>
    <scope>FUNCTION</scope>
    <source>
        <strain>YP-ALS</strain>
    </source>
</reference>
<reference key="13">
    <citation type="journal article" date="2001" name="FEMS Microbiol. Lett.">
        <title>Interaction of Knr4 protein, a protein involved in cell wall synthesis, with tyrosine tRNA synthetase encoded by TYS1 in Saccharomyces cerevisiae.</title>
        <authorList>
            <person name="Dagkessamanskaia A."/>
            <person name="Martin-Yken H."/>
            <person name="Basmaji F."/>
            <person name="Briza P."/>
            <person name="Francois J."/>
        </authorList>
    </citation>
    <scope>INTERACTION WITH KNR4/SMI1</scope>
</reference>
<reference key="14">
    <citation type="journal article" date="2001" name="J. Biochem.">
        <title>Changing the amino acid specificity of yeast tyrosyl-tRNA synthetase by genetic engineering.</title>
        <authorList>
            <person name="Ohno S."/>
            <person name="Yokogawa T."/>
            <person name="Nishikawa K."/>
        </authorList>
    </citation>
    <scope>MUTAGENESIS OF TYR-43</scope>
</reference>
<reference key="15">
    <citation type="journal article" date="2001" name="Mol. Biol. Cell">
        <title>Role of nuclear pools of aminoacyl-tRNA synthetases in tRNA nuclear export.</title>
        <authorList>
            <person name="Azad A.K."/>
            <person name="Stanford D.R."/>
            <person name="Sarkar S."/>
            <person name="Hopper A.K."/>
        </authorList>
    </citation>
    <scope>MUTAGENESIS OF 364-LYS--LYS-368</scope>
    <scope>SUBCELLULAR LOCATION</scope>
</reference>
<reference key="16">
    <citation type="journal article" date="2003" name="Nature">
        <title>Global analysis of protein localization in budding yeast.</title>
        <authorList>
            <person name="Huh W.-K."/>
            <person name="Falvo J.V."/>
            <person name="Gerke L.C."/>
            <person name="Carroll A.S."/>
            <person name="Howson R.W."/>
            <person name="Weissman J.S."/>
            <person name="O'Shea E.K."/>
        </authorList>
    </citation>
    <scope>SUBCELLULAR LOCATION [LARGE SCALE ANALYSIS]</scope>
</reference>
<reference key="17">
    <citation type="journal article" date="2003" name="Nature">
        <title>Global analysis of protein expression in yeast.</title>
        <authorList>
            <person name="Ghaemmaghami S."/>
            <person name="Huh W.-K."/>
            <person name="Bower K."/>
            <person name="Howson R.W."/>
            <person name="Belle A."/>
            <person name="Dephoure N."/>
            <person name="O'Shea E.K."/>
            <person name="Weissman J.S."/>
        </authorList>
    </citation>
    <scope>LEVEL OF PROTEIN EXPRESSION [LARGE SCALE ANALYSIS]</scope>
</reference>
<reference key="18">
    <citation type="journal article" date="2008" name="Mol. Cell. Proteomics">
        <title>A multidimensional chromatography technology for in-depth phosphoproteome analysis.</title>
        <authorList>
            <person name="Albuquerque C.P."/>
            <person name="Smolka M.B."/>
            <person name="Payne S.H."/>
            <person name="Bafna V."/>
            <person name="Eng J."/>
            <person name="Zhou H."/>
        </authorList>
    </citation>
    <scope>PHOSPHORYLATION [LARGE SCALE ANALYSIS] AT SER-235 AND THR-359</scope>
    <scope>IDENTIFICATION BY MASS SPECTROMETRY [LARGE SCALE ANALYSIS]</scope>
</reference>
<reference key="19">
    <citation type="journal article" date="2009" name="Science">
        <title>Global analysis of Cdk1 substrate phosphorylation sites provides insights into evolution.</title>
        <authorList>
            <person name="Holt L.J."/>
            <person name="Tuch B.B."/>
            <person name="Villen J."/>
            <person name="Johnson A.D."/>
            <person name="Gygi S.P."/>
            <person name="Morgan D.O."/>
        </authorList>
    </citation>
    <scope>IDENTIFICATION BY MASS SPECTROMETRY [LARGE SCALE ANALYSIS]</scope>
</reference>
<reference key="20">
    <citation type="journal article" date="2022" name="Cold Spring Harb. Mol. Case Stud.">
        <title>A missense, loss-of-function YARS1 variant in a patient with proximal-predominant motor neuropathy.</title>
        <authorList>
            <person name="Forrest M.E."/>
            <person name="Meyer A.P."/>
            <person name="Laureano Figueroa S.M."/>
            <person name="Antonellis A."/>
        </authorList>
    </citation>
    <scope>DISRUPTION PHENOTYPE</scope>
    <scope>MUTAGENESIS OF GLY-45; PRO-171 AND ASP-321</scope>
</reference>
<reference evidence="17" key="21">
    <citation type="journal article" date="2007" name="Nucleic Acids Res.">
        <title>Structural basis for recognition of cognate tRNA by tyrosyl-tRNA synthetase from three kingdoms.</title>
        <authorList>
            <person name="Tsunoda M."/>
            <person name="Kusakabe Y."/>
            <person name="Tanaka N."/>
            <person name="Ohno S."/>
            <person name="Nakamura M."/>
            <person name="Senda T."/>
            <person name="Moriguchi T."/>
            <person name="Asai N."/>
            <person name="Sekine M."/>
            <person name="Yokogawa T."/>
            <person name="Nishikawa K."/>
            <person name="Nakamura K.T."/>
        </authorList>
    </citation>
    <scope>X-RAY CRYSTALLOGRAPHY (2.40 ANGSTROMS)</scope>
</reference>
<sequence length="394" mass="44020">MSSAATVDPNEAFGLITKNLQEVLNPQIIKDVLEVQKRHLKLYWGTAPTGRPHCGYFVPMTKLADFLKAGCEVTVLLADLHAFLDNMKAPLEVVNYRAKYYELTIKAILRSINVPIEKLKFVVGSSYQLTPDYTMDIFRLSNIVSQNDAKRAGADVVKQVANPLLSGLIYPLMQALDEQFLDVDCQFGGVDQRKIFVLAEENLPSLGYKKRAHLMNPMVPGLAQGGKMSASDPNSKIDLLEEPKQVKKKINSAFCSPGNVEENGLLSFVQYVIAPIQELKFGTNHFEFFIDRPEKFGGPITYKSFEEMKLAFKEEKLSPPDLKIGVADAINELLEPIRQEFANNKEFQEASEKGYPVATPQKSKKAKKPKNKGTKYPGATKTNEIATKLEETKL</sequence>
<name>SYYC_YEAST</name>
<feature type="initiator methionine" description="Removed" evidence="14">
    <location>
        <position position="1"/>
    </location>
</feature>
<feature type="chain" id="PRO_0000055676" description="Tyrosine--tRNA ligase, cytoplasmic">
    <location>
        <begin position="2"/>
        <end position="394"/>
    </location>
</feature>
<feature type="region of interest" description="Disordered" evidence="2">
    <location>
        <begin position="348"/>
        <end position="394"/>
    </location>
</feature>
<feature type="short sequence motif" description="'HIGH' region">
    <location>
        <begin position="48"/>
        <end position="56"/>
    </location>
</feature>
<feature type="short sequence motif" description="'KMSKS' region">
    <location>
        <begin position="227"/>
        <end position="231"/>
    </location>
</feature>
<feature type="short sequence motif" description="Nuclear localization signal">
    <location>
        <begin position="360"/>
        <end position="378"/>
    </location>
</feature>
<feature type="compositionally biased region" description="Basic residues" evidence="2">
    <location>
        <begin position="362"/>
        <end position="373"/>
    </location>
</feature>
<feature type="binding site" evidence="1">
    <location>
        <position position="43"/>
    </location>
    <ligand>
        <name>L-tyrosine</name>
        <dbReference type="ChEBI" id="CHEBI:58315"/>
    </ligand>
</feature>
<feature type="binding site" evidence="1">
    <location>
        <position position="170"/>
    </location>
    <ligand>
        <name>L-tyrosine</name>
        <dbReference type="ChEBI" id="CHEBI:58315"/>
    </ligand>
</feature>
<feature type="binding site" evidence="1">
    <location>
        <position position="174"/>
    </location>
    <ligand>
        <name>L-tyrosine</name>
        <dbReference type="ChEBI" id="CHEBI:58315"/>
    </ligand>
</feature>
<feature type="binding site" evidence="1">
    <location>
        <position position="177"/>
    </location>
    <ligand>
        <name>L-tyrosine</name>
        <dbReference type="ChEBI" id="CHEBI:58315"/>
    </ligand>
</feature>
<feature type="binding site" evidence="1">
    <location>
        <position position="192"/>
    </location>
    <ligand>
        <name>L-tyrosine</name>
        <dbReference type="ChEBI" id="CHEBI:58315"/>
    </ligand>
</feature>
<feature type="modified residue" description="N-acetylserine" evidence="14">
    <location>
        <position position="2"/>
    </location>
</feature>
<feature type="modified residue" description="Phosphoserine" evidence="18">
    <location>
        <position position="235"/>
    </location>
</feature>
<feature type="modified residue" description="Phosphothreonine" evidence="18">
    <location>
        <position position="359"/>
    </location>
</feature>
<feature type="mutagenesis site" description="Decreases catalytic activity for L-tyrosine 400-fold, but allows the utilization of 3-iodo-L-tyrosine and other 3-modified tyrosines as substrates." evidence="8">
    <original>Y</original>
    <variation>G</variation>
    <location>
        <position position="43"/>
    </location>
</feature>
<feature type="mutagenesis site" description="Inviable." evidence="12">
    <original>G</original>
    <variation>R</variation>
    <location>
        <position position="45"/>
    </location>
</feature>
<feature type="mutagenesis site" description="Decreases cell population growth." evidence="12">
    <original>P</original>
    <variation>T</variation>
    <location>
        <position position="171"/>
    </location>
</feature>
<feature type="mutagenesis site" description="Inviable." evidence="12">
    <original>D</original>
    <variation>Y</variation>
    <location>
        <position position="321"/>
    </location>
</feature>
<feature type="mutagenesis site" description="Abolishes nuclear localization." evidence="6">
    <original>KKAKK</original>
    <variation>EEAEE</variation>
    <location>
        <begin position="364"/>
        <end position="368"/>
    </location>
</feature>
<feature type="helix" evidence="19">
    <location>
        <begin position="9"/>
        <end position="17"/>
    </location>
</feature>
<feature type="strand" evidence="19">
    <location>
        <begin position="21"/>
        <end position="24"/>
    </location>
</feature>
<feature type="helix" evidence="19">
    <location>
        <begin position="26"/>
        <end position="34"/>
    </location>
</feature>
<feature type="strand" evidence="19">
    <location>
        <begin position="41"/>
        <end position="46"/>
    </location>
</feature>
<feature type="helix" evidence="19">
    <location>
        <begin position="54"/>
        <end position="56"/>
    </location>
</feature>
<feature type="helix" evidence="19">
    <location>
        <begin position="57"/>
        <end position="68"/>
    </location>
</feature>
<feature type="strand" evidence="19">
    <location>
        <begin position="72"/>
        <end position="77"/>
    </location>
</feature>
<feature type="helix" evidence="19">
    <location>
        <begin position="79"/>
        <end position="84"/>
    </location>
</feature>
<feature type="turn" evidence="19">
    <location>
        <begin position="85"/>
        <end position="87"/>
    </location>
</feature>
<feature type="helix" evidence="19">
    <location>
        <begin position="93"/>
        <end position="111"/>
    </location>
</feature>
<feature type="strand" evidence="19">
    <location>
        <begin position="120"/>
        <end position="123"/>
    </location>
</feature>
<feature type="helix" evidence="19">
    <location>
        <begin position="125"/>
        <end position="128"/>
    </location>
</feature>
<feature type="helix" evidence="19">
    <location>
        <begin position="131"/>
        <end position="141"/>
    </location>
</feature>
<feature type="helix" evidence="19">
    <location>
        <begin position="146"/>
        <end position="152"/>
    </location>
</feature>
<feature type="turn" evidence="19">
    <location>
        <begin position="153"/>
        <end position="156"/>
    </location>
</feature>
<feature type="helix" evidence="19">
    <location>
        <begin position="166"/>
        <end position="180"/>
    </location>
</feature>
<feature type="strand" evidence="19">
    <location>
        <begin position="184"/>
        <end position="189"/>
    </location>
</feature>
<feature type="helix" evidence="19">
    <location>
        <begin position="190"/>
        <end position="192"/>
    </location>
</feature>
<feature type="helix" evidence="19">
    <location>
        <begin position="193"/>
        <end position="202"/>
    </location>
</feature>
<feature type="helix" evidence="19">
    <location>
        <begin position="203"/>
        <end position="206"/>
    </location>
</feature>
<feature type="strand" evidence="19">
    <location>
        <begin position="212"/>
        <end position="216"/>
    </location>
</feature>
<feature type="helix" evidence="19">
    <location>
        <begin position="243"/>
        <end position="252"/>
    </location>
</feature>
<feature type="helix" evidence="19">
    <location>
        <begin position="264"/>
        <end position="271"/>
    </location>
</feature>
<feature type="helix" evidence="19">
    <location>
        <begin position="273"/>
        <end position="278"/>
    </location>
</feature>
<feature type="strand" evidence="19">
    <location>
        <begin position="280"/>
        <end position="282"/>
    </location>
</feature>
<feature type="strand" evidence="19">
    <location>
        <begin position="288"/>
        <end position="290"/>
    </location>
</feature>
<feature type="helix" evidence="19">
    <location>
        <begin position="294"/>
        <end position="296"/>
    </location>
</feature>
<feature type="strand" evidence="19">
    <location>
        <begin position="300"/>
        <end position="304"/>
    </location>
</feature>
<feature type="helix" evidence="19">
    <location>
        <begin position="305"/>
        <end position="313"/>
    </location>
</feature>
<feature type="helix" evidence="19">
    <location>
        <begin position="319"/>
        <end position="343"/>
    </location>
</feature>
<feature type="helix" evidence="19">
    <location>
        <begin position="345"/>
        <end position="354"/>
    </location>
</feature>
<protein>
    <recommendedName>
        <fullName evidence="16">Tyrosine--tRNA ligase, cytoplasmic</fullName>
        <ecNumber evidence="13">6.1.1.1</ecNumber>
    </recommendedName>
    <alternativeName>
        <fullName evidence="15">Tyrosyl-tRNA synthetase</fullName>
        <shortName evidence="15">TyrRS</shortName>
    </alternativeName>
</protein>
<comment type="function">
    <text evidence="3 4 5 11 13">Catalyzes the attachment of L-tyrosine to tRNA(Tyr) in a two-step reaction: L-tyrosine is first activated by ATP to form Tyr-AMP and then transferred to the acceptor end of tRNA(Tyr) (PubMed:10588711, PubMed:10677221, PubMed:10766779, PubMed:3535890, PubMed:8509419). The specificity determinants on tRNA(Tyr) are the base pair C1-G72, the discriminator residue A73, and the three anticodon bases G34, U35 and A36 (PubMed:10677221). Also involved in nuclear tRNA export (PubMed:10588711). Also attaches D-Tyr to tRNA(Tyr), this reaction is about 150-fold less efficient than attachment of L-Tyr (PubMed:10766779).</text>
</comment>
<comment type="catalytic activity">
    <reaction evidence="11 13">
        <text>tRNA(Tyr) + L-tyrosine + ATP = L-tyrosyl-tRNA(Tyr) + AMP + diphosphate + H(+)</text>
        <dbReference type="Rhea" id="RHEA:10220"/>
        <dbReference type="Rhea" id="RHEA-COMP:9706"/>
        <dbReference type="Rhea" id="RHEA-COMP:9707"/>
        <dbReference type="ChEBI" id="CHEBI:15378"/>
        <dbReference type="ChEBI" id="CHEBI:30616"/>
        <dbReference type="ChEBI" id="CHEBI:33019"/>
        <dbReference type="ChEBI" id="CHEBI:58315"/>
        <dbReference type="ChEBI" id="CHEBI:78442"/>
        <dbReference type="ChEBI" id="CHEBI:78536"/>
        <dbReference type="ChEBI" id="CHEBI:456215"/>
        <dbReference type="EC" id="6.1.1.1"/>
    </reaction>
</comment>
<comment type="activity regulation">
    <text evidence="10">Inhibited by N-ethylmaleimide and p-chloromercuribenzoate.</text>
</comment>
<comment type="biophysicochemical properties">
    <kinetics>
        <KM evidence="11">54 nM for tRNA(Tyr)</KM>
        <Vmax evidence="11">280.0 nmol/min/mg enzyme for tRNA(Tyr)</Vmax>
        <text evidence="11">The catalytic activity is reduced by substitutions of residues forming the specificity determinant on the target tRNA(Tyr).</text>
    </kinetics>
</comment>
<comment type="subunit">
    <text evidence="7 10">Homodimer. Interacts with KNR4/SMI1.</text>
</comment>
<comment type="interaction">
    <interactant intactId="EBI-18843">
        <id>P36421</id>
    </interactant>
    <interactant intactId="EBI-17452">
        <id>P32566</id>
        <label>SMI1</label>
    </interactant>
    <organismsDiffer>false</organismsDiffer>
    <experiments>3</experiments>
</comment>
<comment type="subcellular location">
    <subcellularLocation>
        <location>Cytoplasm</location>
    </subcellularLocation>
    <subcellularLocation>
        <location>Nucleus</location>
    </subcellularLocation>
    <text>Predominantly cytoplasmic, only a small fraction (about 1.5%) found in the nucleus.</text>
</comment>
<comment type="disruption phenotype">
    <text evidence="12">Inviable.</text>
</comment>
<comment type="miscellaneous">
    <text evidence="9">Present with 2710 molecules/cell in log phase SD medium.</text>
</comment>
<comment type="similarity">
    <text evidence="16">Belongs to the class-I aminoacyl-tRNA synthetase family.</text>
</comment>
<evidence type="ECO:0000250" key="1">
    <source>
        <dbReference type="UniProtKB" id="P54577"/>
    </source>
</evidence>
<evidence type="ECO:0000256" key="2">
    <source>
        <dbReference type="SAM" id="MobiDB-lite"/>
    </source>
</evidence>
<evidence type="ECO:0000269" key="3">
    <source>
    </source>
</evidence>
<evidence type="ECO:0000269" key="4">
    <source>
    </source>
</evidence>
<evidence type="ECO:0000269" key="5">
    <source>
    </source>
</evidence>
<evidence type="ECO:0000269" key="6">
    <source>
    </source>
</evidence>
<evidence type="ECO:0000269" key="7">
    <source>
    </source>
</evidence>
<evidence type="ECO:0000269" key="8">
    <source>
    </source>
</evidence>
<evidence type="ECO:0000269" key="9">
    <source>
    </source>
</evidence>
<evidence type="ECO:0000269" key="10">
    <source>
    </source>
</evidence>
<evidence type="ECO:0000269" key="11">
    <source>
    </source>
</evidence>
<evidence type="ECO:0000269" key="12">
    <source>
    </source>
</evidence>
<evidence type="ECO:0000269" key="13">
    <source>
    </source>
</evidence>
<evidence type="ECO:0000269" key="14">
    <source ref="7"/>
</evidence>
<evidence type="ECO:0000303" key="15">
    <source>
    </source>
</evidence>
<evidence type="ECO:0000305" key="16"/>
<evidence type="ECO:0007744" key="17">
    <source>
        <dbReference type="PDB" id="2DLC"/>
    </source>
</evidence>
<evidence type="ECO:0007744" key="18">
    <source>
    </source>
</evidence>
<evidence type="ECO:0007829" key="19">
    <source>
        <dbReference type="PDB" id="2DLC"/>
    </source>
</evidence>
<keyword id="KW-0002">3D-structure</keyword>
<keyword id="KW-0007">Acetylation</keyword>
<keyword id="KW-0030">Aminoacyl-tRNA synthetase</keyword>
<keyword id="KW-0067">ATP-binding</keyword>
<keyword id="KW-0963">Cytoplasm</keyword>
<keyword id="KW-0903">Direct protein sequencing</keyword>
<keyword id="KW-0436">Ligase</keyword>
<keyword id="KW-0547">Nucleotide-binding</keyword>
<keyword id="KW-0539">Nucleus</keyword>
<keyword id="KW-0597">Phosphoprotein</keyword>
<keyword id="KW-0648">Protein biosynthesis</keyword>
<keyword id="KW-1185">Reference proteome</keyword>
<accession>P36421</accession>
<accession>D6VUW8</accession>
<gene>
    <name evidence="15" type="primary">TYS1</name>
    <name type="synonym">MGM104</name>
    <name type="ordered locus">YGR185C</name>
    <name type="ORF">G7522</name>
</gene>
<dbReference type="EC" id="6.1.1.1" evidence="13"/>
<dbReference type="EMBL" id="L12221">
    <property type="protein sequence ID" value="AAB59329.1"/>
    <property type="molecule type" value="mRNA"/>
</dbReference>
<dbReference type="EMBL" id="X71998">
    <property type="status" value="NOT_ANNOTATED_CDS"/>
    <property type="molecule type" value="Genomic_DNA"/>
</dbReference>
<dbReference type="EMBL" id="X99074">
    <property type="protein sequence ID" value="CAA67529.1"/>
    <property type="molecule type" value="Genomic_DNA"/>
</dbReference>
<dbReference type="EMBL" id="Z72970">
    <property type="protein sequence ID" value="CAA97211.1"/>
    <property type="molecule type" value="Genomic_DNA"/>
</dbReference>
<dbReference type="EMBL" id="U13015">
    <property type="protein sequence ID" value="AAA61641.1"/>
    <property type="molecule type" value="Genomic_DNA"/>
</dbReference>
<dbReference type="EMBL" id="BK006941">
    <property type="protein sequence ID" value="DAA08279.1"/>
    <property type="molecule type" value="Genomic_DNA"/>
</dbReference>
<dbReference type="PIR" id="A45999">
    <property type="entry name" value="A45999"/>
</dbReference>
<dbReference type="RefSeq" id="NP_011701.3">
    <property type="nucleotide sequence ID" value="NM_001181314.3"/>
</dbReference>
<dbReference type="PDB" id="2DLC">
    <property type="method" value="X-ray"/>
    <property type="resolution" value="2.40 A"/>
    <property type="chains" value="X=1-394"/>
</dbReference>
<dbReference type="PDBsum" id="2DLC"/>
<dbReference type="SMR" id="P36421"/>
<dbReference type="BioGRID" id="33437">
    <property type="interactions" value="264"/>
</dbReference>
<dbReference type="DIP" id="DIP-5548N"/>
<dbReference type="FunCoup" id="P36421">
    <property type="interactions" value="971"/>
</dbReference>
<dbReference type="IntAct" id="P36421">
    <property type="interactions" value="46"/>
</dbReference>
<dbReference type="MINT" id="P36421"/>
<dbReference type="STRING" id="4932.YGR185C"/>
<dbReference type="iPTMnet" id="P36421"/>
<dbReference type="PaxDb" id="4932-YGR185C"/>
<dbReference type="PeptideAtlas" id="P36421"/>
<dbReference type="EnsemblFungi" id="YGR185C_mRNA">
    <property type="protein sequence ID" value="YGR185C"/>
    <property type="gene ID" value="YGR185C"/>
</dbReference>
<dbReference type="GeneID" id="853097"/>
<dbReference type="KEGG" id="sce:YGR185C"/>
<dbReference type="AGR" id="SGD:S000003417"/>
<dbReference type="SGD" id="S000003417">
    <property type="gene designation" value="TYS1"/>
</dbReference>
<dbReference type="VEuPathDB" id="FungiDB:YGR185C"/>
<dbReference type="eggNOG" id="KOG2144">
    <property type="taxonomic scope" value="Eukaryota"/>
</dbReference>
<dbReference type="HOGENOM" id="CLU_035267_0_1_1"/>
<dbReference type="InParanoid" id="P36421"/>
<dbReference type="OMA" id="RKIHMLA"/>
<dbReference type="OrthoDB" id="197206at2759"/>
<dbReference type="BioCyc" id="YEAST:G3O-30875-MONOMER"/>
<dbReference type="BRENDA" id="6.1.1.1">
    <property type="organism ID" value="984"/>
</dbReference>
<dbReference type="BioGRID-ORCS" id="853097">
    <property type="hits" value="4 hits in 10 CRISPR screens"/>
</dbReference>
<dbReference type="CD-CODE" id="E03F929F">
    <property type="entry name" value="Stress granule"/>
</dbReference>
<dbReference type="EvolutionaryTrace" id="P36421"/>
<dbReference type="PRO" id="PR:P36421"/>
<dbReference type="Proteomes" id="UP000002311">
    <property type="component" value="Chromosome VII"/>
</dbReference>
<dbReference type="RNAct" id="P36421">
    <property type="molecule type" value="protein"/>
</dbReference>
<dbReference type="GO" id="GO:0005737">
    <property type="term" value="C:cytoplasm"/>
    <property type="evidence" value="ECO:0000314"/>
    <property type="project" value="SGD"/>
</dbReference>
<dbReference type="GO" id="GO:0010494">
    <property type="term" value="C:cytoplasmic stress granule"/>
    <property type="evidence" value="ECO:0007005"/>
    <property type="project" value="SGD"/>
</dbReference>
<dbReference type="GO" id="GO:0005634">
    <property type="term" value="C:nucleus"/>
    <property type="evidence" value="ECO:0000314"/>
    <property type="project" value="SGD"/>
</dbReference>
<dbReference type="GO" id="GO:0005524">
    <property type="term" value="F:ATP binding"/>
    <property type="evidence" value="ECO:0007669"/>
    <property type="project" value="UniProtKB-KW"/>
</dbReference>
<dbReference type="GO" id="GO:0003729">
    <property type="term" value="F:mRNA binding"/>
    <property type="evidence" value="ECO:0007005"/>
    <property type="project" value="SGD"/>
</dbReference>
<dbReference type="GO" id="GO:1990825">
    <property type="term" value="F:sequence-specific mRNA binding"/>
    <property type="evidence" value="ECO:0000314"/>
    <property type="project" value="SGD"/>
</dbReference>
<dbReference type="GO" id="GO:0004831">
    <property type="term" value="F:tyrosine-tRNA ligase activity"/>
    <property type="evidence" value="ECO:0000314"/>
    <property type="project" value="SGD"/>
</dbReference>
<dbReference type="GO" id="GO:0006437">
    <property type="term" value="P:tyrosyl-tRNA aminoacylation"/>
    <property type="evidence" value="ECO:0000314"/>
    <property type="project" value="SGD"/>
</dbReference>
<dbReference type="CDD" id="cd00805">
    <property type="entry name" value="TyrRS_core"/>
    <property type="match status" value="1"/>
</dbReference>
<dbReference type="FunFam" id="1.10.240.10:FF:000004">
    <property type="entry name" value="Tyrosine--tRNA ligase"/>
    <property type="match status" value="1"/>
</dbReference>
<dbReference type="FunFam" id="3.40.50.620:FF:000040">
    <property type="entry name" value="Tyrosine--tRNA ligase"/>
    <property type="match status" value="1"/>
</dbReference>
<dbReference type="Gene3D" id="3.40.50.620">
    <property type="entry name" value="HUPs"/>
    <property type="match status" value="1"/>
</dbReference>
<dbReference type="Gene3D" id="1.10.240.10">
    <property type="entry name" value="Tyrosyl-Transfer RNA Synthetase"/>
    <property type="match status" value="1"/>
</dbReference>
<dbReference type="InterPro" id="IPR002305">
    <property type="entry name" value="aa-tRNA-synth_Ic"/>
</dbReference>
<dbReference type="InterPro" id="IPR014729">
    <property type="entry name" value="Rossmann-like_a/b/a_fold"/>
</dbReference>
<dbReference type="InterPro" id="IPR002307">
    <property type="entry name" value="Tyr-tRNA-ligase"/>
</dbReference>
<dbReference type="InterPro" id="IPR023617">
    <property type="entry name" value="Tyr-tRNA-ligase_arc/euk-type"/>
</dbReference>
<dbReference type="InterPro" id="IPR050489">
    <property type="entry name" value="Tyr-tRNA_synthase"/>
</dbReference>
<dbReference type="NCBIfam" id="NF006330">
    <property type="entry name" value="PRK08560.1"/>
    <property type="match status" value="1"/>
</dbReference>
<dbReference type="NCBIfam" id="TIGR00234">
    <property type="entry name" value="tyrS"/>
    <property type="match status" value="1"/>
</dbReference>
<dbReference type="PANTHER" id="PTHR46264:SF4">
    <property type="entry name" value="TYROSINE--TRNA LIGASE, CYTOPLASMIC"/>
    <property type="match status" value="1"/>
</dbReference>
<dbReference type="PANTHER" id="PTHR46264">
    <property type="entry name" value="TYROSINE-TRNA LIGASE"/>
    <property type="match status" value="1"/>
</dbReference>
<dbReference type="Pfam" id="PF00579">
    <property type="entry name" value="tRNA-synt_1b"/>
    <property type="match status" value="1"/>
</dbReference>
<dbReference type="PIRSF" id="PIRSF006588">
    <property type="entry name" value="TyrRS_arch_euk"/>
    <property type="match status" value="1"/>
</dbReference>
<dbReference type="PRINTS" id="PR01040">
    <property type="entry name" value="TRNASYNTHTYR"/>
</dbReference>
<dbReference type="SUPFAM" id="SSF52374">
    <property type="entry name" value="Nucleotidylyl transferase"/>
    <property type="match status" value="1"/>
</dbReference>
<organism>
    <name type="scientific">Saccharomyces cerevisiae (strain ATCC 204508 / S288c)</name>
    <name type="common">Baker's yeast</name>
    <dbReference type="NCBI Taxonomy" id="559292"/>
    <lineage>
        <taxon>Eukaryota</taxon>
        <taxon>Fungi</taxon>
        <taxon>Dikarya</taxon>
        <taxon>Ascomycota</taxon>
        <taxon>Saccharomycotina</taxon>
        <taxon>Saccharomycetes</taxon>
        <taxon>Saccharomycetales</taxon>
        <taxon>Saccharomycetaceae</taxon>
        <taxon>Saccharomyces</taxon>
    </lineage>
</organism>